<organism>
    <name type="scientific">Homo sapiens</name>
    <name type="common">Human</name>
    <dbReference type="NCBI Taxonomy" id="9606"/>
    <lineage>
        <taxon>Eukaryota</taxon>
        <taxon>Metazoa</taxon>
        <taxon>Chordata</taxon>
        <taxon>Craniata</taxon>
        <taxon>Vertebrata</taxon>
        <taxon>Euteleostomi</taxon>
        <taxon>Mammalia</taxon>
        <taxon>Eutheria</taxon>
        <taxon>Euarchontoglires</taxon>
        <taxon>Primates</taxon>
        <taxon>Haplorrhini</taxon>
        <taxon>Catarrhini</taxon>
        <taxon>Hominidae</taxon>
        <taxon>Homo</taxon>
    </lineage>
</organism>
<evidence type="ECO:0000255" key="1">
    <source>
        <dbReference type="PROSITE-ProRule" id="PRU00125"/>
    </source>
</evidence>
<evidence type="ECO:0000256" key="2">
    <source>
        <dbReference type="SAM" id="MobiDB-lite"/>
    </source>
</evidence>
<evidence type="ECO:0000269" key="3">
    <source>
    </source>
</evidence>
<evidence type="ECO:0000305" key="4"/>
<evidence type="ECO:0000312" key="5">
    <source>
        <dbReference type="HGNC" id="HGNC:28142"/>
    </source>
</evidence>
<evidence type="ECO:0007744" key="6">
    <source>
        <dbReference type="PDB" id="2LZU"/>
    </source>
</evidence>
<evidence type="ECO:0007744" key="7">
    <source>
    </source>
</evidence>
<evidence type="ECO:0007829" key="8">
    <source>
        <dbReference type="PDB" id="2LZU"/>
    </source>
</evidence>
<name>LIMD2_HUMAN</name>
<gene>
    <name evidence="5" type="primary">LIMD2</name>
    <name type="ORF">SB143</name>
</gene>
<sequence>MFQAAGAAQATPSHDAKGGGSSTVQRSKSFSLRAQVKETCAACQKTVYPMERLVADKLIFHNSCFCCKHCHTKLSLGSYAALHGEFYCKPHFQQLFKSKGNYDEGFGRKQHKELWAHKEVDPGTKTA</sequence>
<accession>Q9BT23</accession>
<accession>D3DU16</accession>
<accession>Q96S91</accession>
<proteinExistence type="evidence at protein level"/>
<feature type="chain" id="PRO_0000251207" description="LIM domain-containing protein 2">
    <location>
        <begin position="1"/>
        <end position="127"/>
    </location>
</feature>
<feature type="domain" description="LIM zinc-binding" evidence="1">
    <location>
        <begin position="38"/>
        <end position="98"/>
    </location>
</feature>
<feature type="region of interest" description="Disordered" evidence="2">
    <location>
        <begin position="1"/>
        <end position="24"/>
    </location>
</feature>
<feature type="binding site" evidence="3 6">
    <location>
        <position position="40"/>
    </location>
    <ligand>
        <name>Zn(2+)</name>
        <dbReference type="ChEBI" id="CHEBI:29105"/>
        <label>1</label>
    </ligand>
</feature>
<feature type="binding site" evidence="3 6">
    <location>
        <position position="43"/>
    </location>
    <ligand>
        <name>Zn(2+)</name>
        <dbReference type="ChEBI" id="CHEBI:29105"/>
        <label>1</label>
    </ligand>
</feature>
<feature type="binding site" evidence="3 6">
    <location>
        <position position="61"/>
    </location>
    <ligand>
        <name>Zn(2+)</name>
        <dbReference type="ChEBI" id="CHEBI:29105"/>
        <label>1</label>
    </ligand>
</feature>
<feature type="binding site" evidence="3 6">
    <location>
        <position position="64"/>
    </location>
    <ligand>
        <name>Zn(2+)</name>
        <dbReference type="ChEBI" id="CHEBI:29105"/>
        <label>1</label>
    </ligand>
</feature>
<feature type="binding site" evidence="3 6">
    <location>
        <position position="67"/>
    </location>
    <ligand>
        <name>Zn(2+)</name>
        <dbReference type="ChEBI" id="CHEBI:29105"/>
        <label>2</label>
    </ligand>
</feature>
<feature type="binding site" evidence="3 6">
    <location>
        <position position="70"/>
    </location>
    <ligand>
        <name>Zn(2+)</name>
        <dbReference type="ChEBI" id="CHEBI:29105"/>
        <label>2</label>
    </ligand>
</feature>
<feature type="binding site" evidence="3 6">
    <location>
        <position position="88"/>
    </location>
    <ligand>
        <name>Zn(2+)</name>
        <dbReference type="ChEBI" id="CHEBI:29105"/>
        <label>2</label>
    </ligand>
</feature>
<feature type="binding site" evidence="3 6">
    <location>
        <position position="91"/>
    </location>
    <ligand>
        <name>Zn(2+)</name>
        <dbReference type="ChEBI" id="CHEBI:29105"/>
        <label>2</label>
    </ligand>
</feature>
<feature type="modified residue" description="N-acetylmethionine" evidence="7">
    <location>
        <position position="1"/>
    </location>
</feature>
<feature type="sequence conflict" description="In Ref. 2; AAK67634." evidence="4" ref="2">
    <original>G</original>
    <variation>E</variation>
    <location>
        <position position="6"/>
    </location>
</feature>
<feature type="strand" evidence="8">
    <location>
        <begin position="41"/>
        <end position="43"/>
    </location>
</feature>
<feature type="strand" evidence="8">
    <location>
        <begin position="45"/>
        <end position="47"/>
    </location>
</feature>
<feature type="turn" evidence="8">
    <location>
        <begin position="49"/>
        <end position="51"/>
    </location>
</feature>
<feature type="strand" evidence="8">
    <location>
        <begin position="52"/>
        <end position="55"/>
    </location>
</feature>
<feature type="strand" evidence="8">
    <location>
        <begin position="58"/>
        <end position="61"/>
    </location>
</feature>
<feature type="turn" evidence="8">
    <location>
        <begin position="62"/>
        <end position="64"/>
    </location>
</feature>
<feature type="strand" evidence="8">
    <location>
        <begin position="68"/>
        <end position="70"/>
    </location>
</feature>
<feature type="turn" evidence="8">
    <location>
        <begin position="75"/>
        <end position="77"/>
    </location>
</feature>
<feature type="helix" evidence="8">
    <location>
        <begin position="89"/>
        <end position="94"/>
    </location>
</feature>
<comment type="function">
    <text evidence="3">Acts as an activator of the protein-kinase ILK, thereby regulating cell motility (PubMed:24590809).</text>
</comment>
<comment type="subunit">
    <text evidence="3">Interacts with ILK (PubMed:24590809).</text>
</comment>
<comment type="interaction">
    <interactant intactId="EBI-2805292">
        <id>Q9BT23</id>
    </interactant>
    <interactant intactId="EBI-357793">
        <id>P60900</id>
        <label>PSMA6</label>
    </interactant>
    <organismsDiffer>false</organismsDiffer>
    <experiments>3</experiments>
</comment>
<comment type="subcellular location">
    <subcellularLocation>
        <location evidence="3">Cytoplasm</location>
    </subcellularLocation>
    <subcellularLocation>
        <location evidence="3">Nucleus</location>
    </subcellularLocation>
    <text evidence="3">Mainly found in cytoplasm, concentrated in membrane ruffles and in streaks reminiscent of focal adhesion plaques (PubMed:24590809). Also found in nucleus (PubMed:24590809).</text>
</comment>
<comment type="induction">
    <text evidence="3">Over-expressed in breast, bladder, melanoma and thyroid cancer cell lines and tumors (at protein level).</text>
</comment>
<comment type="miscellaneous">
    <text evidence="3">May play a role in tumor progression via its ability to activate the ILK protein-kinase activity.</text>
</comment>
<dbReference type="EMBL" id="AK092301">
    <property type="protein sequence ID" value="BAC03855.1"/>
    <property type="molecule type" value="mRNA"/>
</dbReference>
<dbReference type="EMBL" id="AY037154">
    <property type="protein sequence ID" value="AAK67634.1"/>
    <property type="molecule type" value="mRNA"/>
</dbReference>
<dbReference type="EMBL" id="CH471109">
    <property type="protein sequence ID" value="EAW94291.1"/>
    <property type="molecule type" value="Genomic_DNA"/>
</dbReference>
<dbReference type="EMBL" id="CH471109">
    <property type="protein sequence ID" value="EAW94292.1"/>
    <property type="molecule type" value="Genomic_DNA"/>
</dbReference>
<dbReference type="EMBL" id="CH471109">
    <property type="protein sequence ID" value="EAW94294.1"/>
    <property type="molecule type" value="Genomic_DNA"/>
</dbReference>
<dbReference type="EMBL" id="CH471109">
    <property type="protein sequence ID" value="EAW94295.1"/>
    <property type="molecule type" value="Genomic_DNA"/>
</dbReference>
<dbReference type="EMBL" id="CH471109">
    <property type="protein sequence ID" value="EAW94296.1"/>
    <property type="molecule type" value="Genomic_DNA"/>
</dbReference>
<dbReference type="EMBL" id="BC004400">
    <property type="protein sequence ID" value="AAH04400.1"/>
    <property type="molecule type" value="mRNA"/>
</dbReference>
<dbReference type="EMBL" id="BC051812">
    <property type="protein sequence ID" value="AAH51812.1"/>
    <property type="molecule type" value="mRNA"/>
</dbReference>
<dbReference type="CCDS" id="CCDS11641.1"/>
<dbReference type="RefSeq" id="NP_085053.1">
    <property type="nucleotide sequence ID" value="NM_030576.4"/>
</dbReference>
<dbReference type="RefSeq" id="XP_005257760.1">
    <property type="nucleotide sequence ID" value="XM_005257703.2"/>
</dbReference>
<dbReference type="RefSeq" id="XP_005257762.1">
    <property type="nucleotide sequence ID" value="XM_005257705.5"/>
</dbReference>
<dbReference type="RefSeq" id="XP_006722187.1">
    <property type="nucleotide sequence ID" value="XM_006722124.3"/>
</dbReference>
<dbReference type="RefSeq" id="XP_047292809.1">
    <property type="nucleotide sequence ID" value="XM_047436853.1"/>
</dbReference>
<dbReference type="RefSeq" id="XP_054173397.1">
    <property type="nucleotide sequence ID" value="XM_054317422.1"/>
</dbReference>
<dbReference type="RefSeq" id="XP_054173398.1">
    <property type="nucleotide sequence ID" value="XM_054317423.1"/>
</dbReference>
<dbReference type="RefSeq" id="XP_054173399.1">
    <property type="nucleotide sequence ID" value="XM_054317424.1"/>
</dbReference>
<dbReference type="PDB" id="2LZU">
    <property type="method" value="NMR"/>
    <property type="chains" value="A=33-104"/>
</dbReference>
<dbReference type="PDBsum" id="2LZU"/>
<dbReference type="BMRB" id="Q9BT23"/>
<dbReference type="SMR" id="Q9BT23"/>
<dbReference type="BioGRID" id="123306">
    <property type="interactions" value="21"/>
</dbReference>
<dbReference type="FunCoup" id="Q9BT23">
    <property type="interactions" value="907"/>
</dbReference>
<dbReference type="IntAct" id="Q9BT23">
    <property type="interactions" value="2"/>
</dbReference>
<dbReference type="STRING" id="9606.ENSP00000259006"/>
<dbReference type="GlyGen" id="Q9BT23">
    <property type="glycosylation" value="2 sites, 1 O-linked glycan (1 site)"/>
</dbReference>
<dbReference type="iPTMnet" id="Q9BT23"/>
<dbReference type="PhosphoSitePlus" id="Q9BT23"/>
<dbReference type="BioMuta" id="LIMD2"/>
<dbReference type="DMDM" id="74752322"/>
<dbReference type="jPOST" id="Q9BT23"/>
<dbReference type="MassIVE" id="Q9BT23"/>
<dbReference type="PaxDb" id="9606-ENSP00000259006"/>
<dbReference type="PeptideAtlas" id="Q9BT23"/>
<dbReference type="ProteomicsDB" id="78944"/>
<dbReference type="Pumba" id="Q9BT23"/>
<dbReference type="Antibodypedia" id="45674">
    <property type="antibodies" value="85 antibodies from 20 providers"/>
</dbReference>
<dbReference type="DNASU" id="80774"/>
<dbReference type="Ensembl" id="ENST00000259006.8">
    <property type="protein sequence ID" value="ENSP00000259006.3"/>
    <property type="gene ID" value="ENSG00000136490.9"/>
</dbReference>
<dbReference type="Ensembl" id="ENST00000578061.5">
    <property type="protein sequence ID" value="ENSP00000464003.1"/>
    <property type="gene ID" value="ENSG00000136490.9"/>
</dbReference>
<dbReference type="Ensembl" id="ENST00000578402.5">
    <property type="protein sequence ID" value="ENSP00000462707.1"/>
    <property type="gene ID" value="ENSG00000136490.9"/>
</dbReference>
<dbReference type="GeneID" id="80774"/>
<dbReference type="KEGG" id="hsa:80774"/>
<dbReference type="MANE-Select" id="ENST00000259006.8">
    <property type="protein sequence ID" value="ENSP00000259006.3"/>
    <property type="RefSeq nucleotide sequence ID" value="NM_030576.4"/>
    <property type="RefSeq protein sequence ID" value="NP_085053.1"/>
</dbReference>
<dbReference type="UCSC" id="uc002jbj.5">
    <property type="organism name" value="human"/>
</dbReference>
<dbReference type="AGR" id="HGNC:28142"/>
<dbReference type="CTD" id="80774"/>
<dbReference type="DisGeNET" id="80774"/>
<dbReference type="GeneCards" id="LIMD2"/>
<dbReference type="HGNC" id="HGNC:28142">
    <property type="gene designation" value="LIMD2"/>
</dbReference>
<dbReference type="HPA" id="ENSG00000136490">
    <property type="expression patterns" value="Tissue enhanced (bone marrow, lymphoid tissue)"/>
</dbReference>
<dbReference type="neXtProt" id="NX_Q9BT23"/>
<dbReference type="OpenTargets" id="ENSG00000136490"/>
<dbReference type="PharmGKB" id="PA143485528"/>
<dbReference type="VEuPathDB" id="HostDB:ENSG00000136490"/>
<dbReference type="eggNOG" id="KOG1700">
    <property type="taxonomic scope" value="Eukaryota"/>
</dbReference>
<dbReference type="GeneTree" id="ENSGT00940000158377"/>
<dbReference type="InParanoid" id="Q9BT23"/>
<dbReference type="OMA" id="APAHEAK"/>
<dbReference type="OrthoDB" id="6129702at2759"/>
<dbReference type="PAN-GO" id="Q9BT23">
    <property type="GO annotations" value="0 GO annotations based on evolutionary models"/>
</dbReference>
<dbReference type="PhylomeDB" id="Q9BT23"/>
<dbReference type="PathwayCommons" id="Q9BT23"/>
<dbReference type="SignaLink" id="Q9BT23"/>
<dbReference type="BioGRID-ORCS" id="80774">
    <property type="hits" value="25 hits in 1149 CRISPR screens"/>
</dbReference>
<dbReference type="ChiTaRS" id="LIMD2">
    <property type="organism name" value="human"/>
</dbReference>
<dbReference type="EvolutionaryTrace" id="Q9BT23"/>
<dbReference type="GenomeRNAi" id="80774"/>
<dbReference type="Pharos" id="Q9BT23">
    <property type="development level" value="Tbio"/>
</dbReference>
<dbReference type="PRO" id="PR:Q9BT23"/>
<dbReference type="Proteomes" id="UP000005640">
    <property type="component" value="Chromosome 17"/>
</dbReference>
<dbReference type="RNAct" id="Q9BT23">
    <property type="molecule type" value="protein"/>
</dbReference>
<dbReference type="Bgee" id="ENSG00000136490">
    <property type="expression patterns" value="Expressed in granulocyte and 102 other cell types or tissues"/>
</dbReference>
<dbReference type="ExpressionAtlas" id="Q9BT23">
    <property type="expression patterns" value="baseline and differential"/>
</dbReference>
<dbReference type="GO" id="GO:0015629">
    <property type="term" value="C:actin cytoskeleton"/>
    <property type="evidence" value="ECO:0000318"/>
    <property type="project" value="GO_Central"/>
</dbReference>
<dbReference type="GO" id="GO:0005829">
    <property type="term" value="C:cytosol"/>
    <property type="evidence" value="ECO:0000314"/>
    <property type="project" value="HPA"/>
</dbReference>
<dbReference type="GO" id="GO:0005654">
    <property type="term" value="C:nucleoplasm"/>
    <property type="evidence" value="ECO:0000314"/>
    <property type="project" value="HPA"/>
</dbReference>
<dbReference type="GO" id="GO:0005886">
    <property type="term" value="C:plasma membrane"/>
    <property type="evidence" value="ECO:0000318"/>
    <property type="project" value="GO_Central"/>
</dbReference>
<dbReference type="GO" id="GO:0051015">
    <property type="term" value="F:actin filament binding"/>
    <property type="evidence" value="ECO:0000318"/>
    <property type="project" value="GO_Central"/>
</dbReference>
<dbReference type="GO" id="GO:0046872">
    <property type="term" value="F:metal ion binding"/>
    <property type="evidence" value="ECO:0007669"/>
    <property type="project" value="UniProtKB-KW"/>
</dbReference>
<dbReference type="GO" id="GO:0051017">
    <property type="term" value="P:actin filament bundle assembly"/>
    <property type="evidence" value="ECO:0000318"/>
    <property type="project" value="GO_Central"/>
</dbReference>
<dbReference type="CDD" id="cd09486">
    <property type="entry name" value="LIM_Eplin_like_1"/>
    <property type="match status" value="1"/>
</dbReference>
<dbReference type="FunFam" id="2.10.110.10:FF:000002">
    <property type="entry name" value="LIM domain and actin-binding 1"/>
    <property type="match status" value="1"/>
</dbReference>
<dbReference type="Gene3D" id="2.10.110.10">
    <property type="entry name" value="Cysteine Rich Protein"/>
    <property type="match status" value="1"/>
</dbReference>
<dbReference type="InterPro" id="IPR044115">
    <property type="entry name" value="LIM_LIMD2"/>
</dbReference>
<dbReference type="InterPro" id="IPR001781">
    <property type="entry name" value="Znf_LIM"/>
</dbReference>
<dbReference type="PANTHER" id="PTHR24206">
    <property type="entry name" value="OS06G0237300 PROTEIN"/>
    <property type="match status" value="1"/>
</dbReference>
<dbReference type="Pfam" id="PF00412">
    <property type="entry name" value="LIM"/>
    <property type="match status" value="1"/>
</dbReference>
<dbReference type="SMART" id="SM00132">
    <property type="entry name" value="LIM"/>
    <property type="match status" value="1"/>
</dbReference>
<dbReference type="SUPFAM" id="SSF57716">
    <property type="entry name" value="Glucocorticoid receptor-like (DNA-binding domain)"/>
    <property type="match status" value="2"/>
</dbReference>
<dbReference type="PROSITE" id="PS00478">
    <property type="entry name" value="LIM_DOMAIN_1"/>
    <property type="match status" value="1"/>
</dbReference>
<dbReference type="PROSITE" id="PS50023">
    <property type="entry name" value="LIM_DOMAIN_2"/>
    <property type="match status" value="1"/>
</dbReference>
<reference key="1">
    <citation type="journal article" date="2004" name="Nat. Genet.">
        <title>Complete sequencing and characterization of 21,243 full-length human cDNAs.</title>
        <authorList>
            <person name="Ota T."/>
            <person name="Suzuki Y."/>
            <person name="Nishikawa T."/>
            <person name="Otsuki T."/>
            <person name="Sugiyama T."/>
            <person name="Irie R."/>
            <person name="Wakamatsu A."/>
            <person name="Hayashi K."/>
            <person name="Sato H."/>
            <person name="Nagai K."/>
            <person name="Kimura K."/>
            <person name="Makita H."/>
            <person name="Sekine M."/>
            <person name="Obayashi M."/>
            <person name="Nishi T."/>
            <person name="Shibahara T."/>
            <person name="Tanaka T."/>
            <person name="Ishii S."/>
            <person name="Yamamoto J."/>
            <person name="Saito K."/>
            <person name="Kawai Y."/>
            <person name="Isono Y."/>
            <person name="Nakamura Y."/>
            <person name="Nagahari K."/>
            <person name="Murakami K."/>
            <person name="Yasuda T."/>
            <person name="Iwayanagi T."/>
            <person name="Wagatsuma M."/>
            <person name="Shiratori A."/>
            <person name="Sudo H."/>
            <person name="Hosoiri T."/>
            <person name="Kaku Y."/>
            <person name="Kodaira H."/>
            <person name="Kondo H."/>
            <person name="Sugawara M."/>
            <person name="Takahashi M."/>
            <person name="Kanda K."/>
            <person name="Yokoi T."/>
            <person name="Furuya T."/>
            <person name="Kikkawa E."/>
            <person name="Omura Y."/>
            <person name="Abe K."/>
            <person name="Kamihara K."/>
            <person name="Katsuta N."/>
            <person name="Sato K."/>
            <person name="Tanikawa M."/>
            <person name="Yamazaki M."/>
            <person name="Ninomiya K."/>
            <person name="Ishibashi T."/>
            <person name="Yamashita H."/>
            <person name="Murakawa K."/>
            <person name="Fujimori K."/>
            <person name="Tanai H."/>
            <person name="Kimata M."/>
            <person name="Watanabe M."/>
            <person name="Hiraoka S."/>
            <person name="Chiba Y."/>
            <person name="Ishida S."/>
            <person name="Ono Y."/>
            <person name="Takiguchi S."/>
            <person name="Watanabe S."/>
            <person name="Yosida M."/>
            <person name="Hotuta T."/>
            <person name="Kusano J."/>
            <person name="Kanehori K."/>
            <person name="Takahashi-Fujii A."/>
            <person name="Hara H."/>
            <person name="Tanase T.-O."/>
            <person name="Nomura Y."/>
            <person name="Togiya S."/>
            <person name="Komai F."/>
            <person name="Hara R."/>
            <person name="Takeuchi K."/>
            <person name="Arita M."/>
            <person name="Imose N."/>
            <person name="Musashino K."/>
            <person name="Yuuki H."/>
            <person name="Oshima A."/>
            <person name="Sasaki N."/>
            <person name="Aotsuka S."/>
            <person name="Yoshikawa Y."/>
            <person name="Matsunawa H."/>
            <person name="Ichihara T."/>
            <person name="Shiohata N."/>
            <person name="Sano S."/>
            <person name="Moriya S."/>
            <person name="Momiyama H."/>
            <person name="Satoh N."/>
            <person name="Takami S."/>
            <person name="Terashima Y."/>
            <person name="Suzuki O."/>
            <person name="Nakagawa S."/>
            <person name="Senoh A."/>
            <person name="Mizoguchi H."/>
            <person name="Goto Y."/>
            <person name="Shimizu F."/>
            <person name="Wakebe H."/>
            <person name="Hishigaki H."/>
            <person name="Watanabe T."/>
            <person name="Sugiyama A."/>
            <person name="Takemoto M."/>
            <person name="Kawakami B."/>
            <person name="Yamazaki M."/>
            <person name="Watanabe K."/>
            <person name="Kumagai A."/>
            <person name="Itakura S."/>
            <person name="Fukuzumi Y."/>
            <person name="Fujimori Y."/>
            <person name="Komiyama M."/>
            <person name="Tashiro H."/>
            <person name="Tanigami A."/>
            <person name="Fujiwara T."/>
            <person name="Ono T."/>
            <person name="Yamada K."/>
            <person name="Fujii Y."/>
            <person name="Ozaki K."/>
            <person name="Hirao M."/>
            <person name="Ohmori Y."/>
            <person name="Kawabata A."/>
            <person name="Hikiji T."/>
            <person name="Kobatake N."/>
            <person name="Inagaki H."/>
            <person name="Ikema Y."/>
            <person name="Okamoto S."/>
            <person name="Okitani R."/>
            <person name="Kawakami T."/>
            <person name="Noguchi S."/>
            <person name="Itoh T."/>
            <person name="Shigeta K."/>
            <person name="Senba T."/>
            <person name="Matsumura K."/>
            <person name="Nakajima Y."/>
            <person name="Mizuno T."/>
            <person name="Morinaga M."/>
            <person name="Sasaki M."/>
            <person name="Togashi T."/>
            <person name="Oyama M."/>
            <person name="Hata H."/>
            <person name="Watanabe M."/>
            <person name="Komatsu T."/>
            <person name="Mizushima-Sugano J."/>
            <person name="Satoh T."/>
            <person name="Shirai Y."/>
            <person name="Takahashi Y."/>
            <person name="Nakagawa K."/>
            <person name="Okumura K."/>
            <person name="Nagase T."/>
            <person name="Nomura N."/>
            <person name="Kikuchi H."/>
            <person name="Masuho Y."/>
            <person name="Yamashita R."/>
            <person name="Nakai K."/>
            <person name="Yada T."/>
            <person name="Nakamura Y."/>
            <person name="Ohara O."/>
            <person name="Isogai T."/>
            <person name="Sugano S."/>
        </authorList>
    </citation>
    <scope>NUCLEOTIDE SEQUENCE [LARGE SCALE MRNA]</scope>
    <source>
        <tissue>Brain</tissue>
    </source>
</reference>
<reference key="2">
    <citation type="submission" date="2001-05" db="EMBL/GenBank/DDBJ databases">
        <authorList>
            <person name="Li N."/>
            <person name="Zhang W."/>
            <person name="Zhang M."/>
            <person name="Wan T."/>
            <person name="Cao X."/>
        </authorList>
    </citation>
    <scope>NUCLEOTIDE SEQUENCE [LARGE SCALE MRNA]</scope>
</reference>
<reference key="3">
    <citation type="submission" date="2005-09" db="EMBL/GenBank/DDBJ databases">
        <authorList>
            <person name="Mural R.J."/>
            <person name="Istrail S."/>
            <person name="Sutton G.G."/>
            <person name="Florea L."/>
            <person name="Halpern A.L."/>
            <person name="Mobarry C.M."/>
            <person name="Lippert R."/>
            <person name="Walenz B."/>
            <person name="Shatkay H."/>
            <person name="Dew I."/>
            <person name="Miller J.R."/>
            <person name="Flanigan M.J."/>
            <person name="Edwards N.J."/>
            <person name="Bolanos R."/>
            <person name="Fasulo D."/>
            <person name="Halldorsson B.V."/>
            <person name="Hannenhalli S."/>
            <person name="Turner R."/>
            <person name="Yooseph S."/>
            <person name="Lu F."/>
            <person name="Nusskern D.R."/>
            <person name="Shue B.C."/>
            <person name="Zheng X.H."/>
            <person name="Zhong F."/>
            <person name="Delcher A.L."/>
            <person name="Huson D.H."/>
            <person name="Kravitz S.A."/>
            <person name="Mouchard L."/>
            <person name="Reinert K."/>
            <person name="Remington K.A."/>
            <person name="Clark A.G."/>
            <person name="Waterman M.S."/>
            <person name="Eichler E.E."/>
            <person name="Adams M.D."/>
            <person name="Hunkapiller M.W."/>
            <person name="Myers E.W."/>
            <person name="Venter J.C."/>
        </authorList>
    </citation>
    <scope>NUCLEOTIDE SEQUENCE [LARGE SCALE GENOMIC DNA]</scope>
</reference>
<reference key="4">
    <citation type="journal article" date="2004" name="Genome Res.">
        <title>The status, quality, and expansion of the NIH full-length cDNA project: the Mammalian Gene Collection (MGC).</title>
        <authorList>
            <consortium name="The MGC Project Team"/>
        </authorList>
    </citation>
    <scope>NUCLEOTIDE SEQUENCE [LARGE SCALE MRNA]</scope>
    <source>
        <tissue>Brain</tissue>
        <tissue>Placenta</tissue>
    </source>
</reference>
<reference key="5">
    <citation type="journal article" date="2009" name="Anal. Chem.">
        <title>Lys-N and trypsin cover complementary parts of the phosphoproteome in a refined SCX-based approach.</title>
        <authorList>
            <person name="Gauci S."/>
            <person name="Helbig A.O."/>
            <person name="Slijper M."/>
            <person name="Krijgsveld J."/>
            <person name="Heck A.J."/>
            <person name="Mohammed S."/>
        </authorList>
    </citation>
    <scope>ACETYLATION [LARGE SCALE ANALYSIS] AT MET-1</scope>
    <scope>IDENTIFICATION BY MASS SPECTROMETRY [LARGE SCALE ANALYSIS]</scope>
</reference>
<reference key="6">
    <citation type="journal article" date="2011" name="BMC Syst. Biol.">
        <title>Initial characterization of the human central proteome.</title>
        <authorList>
            <person name="Burkard T.R."/>
            <person name="Planyavsky M."/>
            <person name="Kaupe I."/>
            <person name="Breitwieser F.P."/>
            <person name="Buerckstuemmer T."/>
            <person name="Bennett K.L."/>
            <person name="Superti-Furga G."/>
            <person name="Colinge J."/>
        </authorList>
    </citation>
    <scope>IDENTIFICATION BY MASS SPECTROMETRY [LARGE SCALE ANALYSIS]</scope>
</reference>
<reference evidence="6" key="7">
    <citation type="journal article" date="2014" name="Cancer Res.">
        <title>LIMD2 is a small LIM-only protein overexpressed in metastatic lesions that regulates cell motility and tumor progression by directly binding to and activating the integrin-linked kinase.</title>
        <authorList>
            <person name="Peng H."/>
            <person name="Talebzadeh-Farrooji M."/>
            <person name="Osborne M.J."/>
            <person name="Prokop J.W."/>
            <person name="McDonald P.C."/>
            <person name="Karar J."/>
            <person name="Hou Z."/>
            <person name="He M."/>
            <person name="Kebebew E."/>
            <person name="Orntoft T."/>
            <person name="Herlyn M."/>
            <person name="Caton A.J."/>
            <person name="Fredericks W."/>
            <person name="Malkowicz B."/>
            <person name="Paterno C.S."/>
            <person name="Carolin A.S."/>
            <person name="Speicher D.W."/>
            <person name="Skordalakes E."/>
            <person name="Huang Q."/>
            <person name="Dedhar S."/>
            <person name="Borden K.L."/>
            <person name="Rauscher F.J. III"/>
        </authorList>
    </citation>
    <scope>STRUCTURE BY NMR OF 33-104 IN COMPLEX WITH ZINC</scope>
    <scope>ZINC-BINDING</scope>
    <scope>FUNCTION</scope>
    <scope>SUBCELLULAR LOCATION</scope>
</reference>
<keyword id="KW-0002">3D-structure</keyword>
<keyword id="KW-0007">Acetylation</keyword>
<keyword id="KW-0963">Cytoplasm</keyword>
<keyword id="KW-0440">LIM domain</keyword>
<keyword id="KW-0479">Metal-binding</keyword>
<keyword id="KW-0539">Nucleus</keyword>
<keyword id="KW-1267">Proteomics identification</keyword>
<keyword id="KW-1185">Reference proteome</keyword>
<keyword id="KW-0862">Zinc</keyword>
<protein>
    <recommendedName>
        <fullName evidence="4">LIM domain-containing protein 2</fullName>
    </recommendedName>
</protein>